<comment type="function">
    <text evidence="1">Probable metalloprotease.</text>
</comment>
<comment type="subcellular location">
    <subcellularLocation>
        <location evidence="2">Cytoplasm</location>
    </subcellularLocation>
</comment>
<comment type="similarity">
    <text evidence="2">Belongs to the peptidase U62 family.</text>
</comment>
<reference key="1">
    <citation type="journal article" date="2000" name="Nature">
        <title>Genome sequence of the endocellular bacterial symbiont of aphids Buchnera sp. APS.</title>
        <authorList>
            <person name="Shigenobu S."/>
            <person name="Watanabe H."/>
            <person name="Hattori M."/>
            <person name="Sakaki Y."/>
            <person name="Ishikawa H."/>
        </authorList>
    </citation>
    <scope>NUCLEOTIDE SEQUENCE [LARGE SCALE GENOMIC DNA]</scope>
    <source>
        <strain>APS</strain>
    </source>
</reference>
<organism>
    <name type="scientific">Buchnera aphidicola subsp. Acyrthosiphon pisum (strain APS)</name>
    <name type="common">Acyrthosiphon pisum symbiotic bacterium</name>
    <dbReference type="NCBI Taxonomy" id="107806"/>
    <lineage>
        <taxon>Bacteria</taxon>
        <taxon>Pseudomonadati</taxon>
        <taxon>Pseudomonadota</taxon>
        <taxon>Gammaproteobacteria</taxon>
        <taxon>Enterobacterales</taxon>
        <taxon>Erwiniaceae</taxon>
        <taxon>Buchnera</taxon>
    </lineage>
</organism>
<dbReference type="EC" id="3.4.-.-"/>
<dbReference type="EMBL" id="BA000003">
    <property type="protein sequence ID" value="BAB12809.1"/>
    <property type="molecule type" value="Genomic_DNA"/>
</dbReference>
<dbReference type="RefSeq" id="NP_239923.1">
    <property type="nucleotide sequence ID" value="NC_002528.1"/>
</dbReference>
<dbReference type="RefSeq" id="WP_010895940.1">
    <property type="nucleotide sequence ID" value="NC_002528.1"/>
</dbReference>
<dbReference type="SMR" id="P57191"/>
<dbReference type="STRING" id="563178.BUAP5A_088"/>
<dbReference type="EnsemblBacteria" id="BAB12809">
    <property type="protein sequence ID" value="BAB12809"/>
    <property type="gene ID" value="BAB12809"/>
</dbReference>
<dbReference type="KEGG" id="buc:BU089"/>
<dbReference type="PATRIC" id="fig|107806.10.peg.97"/>
<dbReference type="eggNOG" id="COG0312">
    <property type="taxonomic scope" value="Bacteria"/>
</dbReference>
<dbReference type="HOGENOM" id="CLU_026425_0_0_6"/>
<dbReference type="Proteomes" id="UP000001806">
    <property type="component" value="Chromosome"/>
</dbReference>
<dbReference type="GO" id="GO:0005829">
    <property type="term" value="C:cytosol"/>
    <property type="evidence" value="ECO:0007669"/>
    <property type="project" value="TreeGrafter"/>
</dbReference>
<dbReference type="GO" id="GO:0008237">
    <property type="term" value="F:metallopeptidase activity"/>
    <property type="evidence" value="ECO:0007669"/>
    <property type="project" value="UniProtKB-KW"/>
</dbReference>
<dbReference type="GO" id="GO:0006508">
    <property type="term" value="P:proteolysis"/>
    <property type="evidence" value="ECO:0007669"/>
    <property type="project" value="UniProtKB-KW"/>
</dbReference>
<dbReference type="Gene3D" id="3.30.2290.10">
    <property type="entry name" value="PmbA/TldD superfamily"/>
    <property type="match status" value="1"/>
</dbReference>
<dbReference type="InterPro" id="IPR045569">
    <property type="entry name" value="Metalloprtase-TldD/E_C"/>
</dbReference>
<dbReference type="InterPro" id="IPR045570">
    <property type="entry name" value="Metalloprtase-TldD/E_cen_dom"/>
</dbReference>
<dbReference type="InterPro" id="IPR002510">
    <property type="entry name" value="Metalloprtase-TldD/E_N"/>
</dbReference>
<dbReference type="InterPro" id="IPR047657">
    <property type="entry name" value="PmbA"/>
</dbReference>
<dbReference type="InterPro" id="IPR035068">
    <property type="entry name" value="TldD/PmbA_N"/>
</dbReference>
<dbReference type="InterPro" id="IPR036059">
    <property type="entry name" value="TldD/PmbA_sf"/>
</dbReference>
<dbReference type="NCBIfam" id="NF008268">
    <property type="entry name" value="PRK11040.1"/>
    <property type="match status" value="1"/>
</dbReference>
<dbReference type="PANTHER" id="PTHR43421">
    <property type="entry name" value="METALLOPROTEASE PMBA"/>
    <property type="match status" value="1"/>
</dbReference>
<dbReference type="PANTHER" id="PTHR43421:SF1">
    <property type="entry name" value="METALLOPROTEASE PMBA"/>
    <property type="match status" value="1"/>
</dbReference>
<dbReference type="Pfam" id="PF01523">
    <property type="entry name" value="PmbA_TldD_1st"/>
    <property type="match status" value="1"/>
</dbReference>
<dbReference type="Pfam" id="PF19290">
    <property type="entry name" value="PmbA_TldD_2nd"/>
    <property type="match status" value="1"/>
</dbReference>
<dbReference type="Pfam" id="PF19289">
    <property type="entry name" value="PmbA_TldD_3rd"/>
    <property type="match status" value="1"/>
</dbReference>
<dbReference type="SUPFAM" id="SSF111283">
    <property type="entry name" value="Putative modulator of DNA gyrase, PmbA/TldD"/>
    <property type="match status" value="1"/>
</dbReference>
<feature type="chain" id="PRO_0000142348" description="Metalloprotease PmbA homolog">
    <location>
        <begin position="1"/>
        <end position="446"/>
    </location>
</feature>
<proteinExistence type="inferred from homology"/>
<keyword id="KW-0963">Cytoplasm</keyword>
<keyword id="KW-0378">Hydrolase</keyword>
<keyword id="KW-0482">Metalloprotease</keyword>
<keyword id="KW-0645">Protease</keyword>
<keyword id="KW-1185">Reference proteome</keyword>
<sequence length="446" mass="50402">MQLIKEIENEELHLVNTVKNTLKLSKNINASVEVFIKKTIGISVNVRNNVVENVEFNSDGGLFITVYNKFSKGSVSSKDFSIKNIKNMLDIAINISKYSSSDFFSGLPDIKFLCFHSMELDLFHPWEFNIENAIKMSILSEKSAFESDKRIVNSEGSFLNSHTTINVFGNSLGVLEKYKSTRYSNYTCMIAKDKNSMQRDFDYSLSRRIDDLIKPEILGQKTAKRAISRLGSRKIQTMRSPIIFSSEISHMFFSHLASAISGDNVYQKSTFLINDLKMKIFPDWLDIEENPHLKRGLGSKPFDNEGVATEIKYIIKAGILQTWLLNCYNARKLKLDSTGNCGGIHNWLVSNQNISFEELLKKMDQGILVTELMGQGVDIINGNYSRGAVGFWVEKGKISYPINEITISGNLRNMWNNIVSISSDVDRRNNIQCGSVLLSEIQVSGN</sequence>
<name>PMBA_BUCAI</name>
<protein>
    <recommendedName>
        <fullName>Metalloprotease PmbA homolog</fullName>
        <ecNumber>3.4.-.-</ecNumber>
    </recommendedName>
</protein>
<accession>P57191</accession>
<evidence type="ECO:0000250" key="1"/>
<evidence type="ECO:0000305" key="2"/>
<gene>
    <name type="primary">pmbA</name>
    <name type="ordered locus">BU089</name>
</gene>